<dbReference type="EC" id="4.2.1.10" evidence="1"/>
<dbReference type="EMBL" id="AP006627">
    <property type="protein sequence ID" value="BAD63076.1"/>
    <property type="molecule type" value="Genomic_DNA"/>
</dbReference>
<dbReference type="RefSeq" id="WP_011245393.1">
    <property type="nucleotide sequence ID" value="NC_006582.1"/>
</dbReference>
<dbReference type="SMR" id="Q5WKM9"/>
<dbReference type="STRING" id="66692.ABC0536"/>
<dbReference type="KEGG" id="bcl:ABC0536"/>
<dbReference type="eggNOG" id="COG0710">
    <property type="taxonomic scope" value="Bacteria"/>
</dbReference>
<dbReference type="HOGENOM" id="CLU_064444_0_0_9"/>
<dbReference type="OrthoDB" id="9813659at2"/>
<dbReference type="UniPathway" id="UPA00053">
    <property type="reaction ID" value="UER00086"/>
</dbReference>
<dbReference type="Proteomes" id="UP000001168">
    <property type="component" value="Chromosome"/>
</dbReference>
<dbReference type="GO" id="GO:0003855">
    <property type="term" value="F:3-dehydroquinate dehydratase activity"/>
    <property type="evidence" value="ECO:0007669"/>
    <property type="project" value="UniProtKB-UniRule"/>
</dbReference>
<dbReference type="GO" id="GO:0046279">
    <property type="term" value="P:3,4-dihydroxybenzoate biosynthetic process"/>
    <property type="evidence" value="ECO:0007669"/>
    <property type="project" value="UniProtKB-ARBA"/>
</dbReference>
<dbReference type="GO" id="GO:0008652">
    <property type="term" value="P:amino acid biosynthetic process"/>
    <property type="evidence" value="ECO:0007669"/>
    <property type="project" value="UniProtKB-KW"/>
</dbReference>
<dbReference type="GO" id="GO:0009073">
    <property type="term" value="P:aromatic amino acid family biosynthetic process"/>
    <property type="evidence" value="ECO:0007669"/>
    <property type="project" value="UniProtKB-KW"/>
</dbReference>
<dbReference type="GO" id="GO:0009423">
    <property type="term" value="P:chorismate biosynthetic process"/>
    <property type="evidence" value="ECO:0007669"/>
    <property type="project" value="UniProtKB-UniRule"/>
</dbReference>
<dbReference type="CDD" id="cd00502">
    <property type="entry name" value="DHQase_I"/>
    <property type="match status" value="1"/>
</dbReference>
<dbReference type="FunFam" id="3.20.20.70:FF:000047">
    <property type="entry name" value="3-dehydroquinate dehydratase"/>
    <property type="match status" value="1"/>
</dbReference>
<dbReference type="Gene3D" id="3.20.20.70">
    <property type="entry name" value="Aldolase class I"/>
    <property type="match status" value="1"/>
</dbReference>
<dbReference type="HAMAP" id="MF_00214">
    <property type="entry name" value="AroD"/>
    <property type="match status" value="1"/>
</dbReference>
<dbReference type="InterPro" id="IPR013785">
    <property type="entry name" value="Aldolase_TIM"/>
</dbReference>
<dbReference type="InterPro" id="IPR001381">
    <property type="entry name" value="DHquinase_I"/>
</dbReference>
<dbReference type="InterPro" id="IPR050146">
    <property type="entry name" value="Type-I_3-dehydroquinase"/>
</dbReference>
<dbReference type="NCBIfam" id="TIGR01093">
    <property type="entry name" value="aroD"/>
    <property type="match status" value="1"/>
</dbReference>
<dbReference type="PANTHER" id="PTHR43699">
    <property type="entry name" value="3-DEHYDROQUINATE DEHYDRATASE"/>
    <property type="match status" value="1"/>
</dbReference>
<dbReference type="PANTHER" id="PTHR43699:SF1">
    <property type="entry name" value="3-DEHYDROQUINATE DEHYDRATASE"/>
    <property type="match status" value="1"/>
</dbReference>
<dbReference type="Pfam" id="PF01487">
    <property type="entry name" value="DHquinase_I"/>
    <property type="match status" value="1"/>
</dbReference>
<dbReference type="SUPFAM" id="SSF51569">
    <property type="entry name" value="Aldolase"/>
    <property type="match status" value="1"/>
</dbReference>
<comment type="function">
    <text evidence="1">Involved in the third step of the chorismate pathway, which leads to the biosynthesis of aromatic amino acids. Catalyzes the cis-dehydration of 3-dehydroquinate (DHQ) and introduces the first double bond of the aromatic ring to yield 3-dehydroshikimate.</text>
</comment>
<comment type="catalytic activity">
    <reaction evidence="1">
        <text>3-dehydroquinate = 3-dehydroshikimate + H2O</text>
        <dbReference type="Rhea" id="RHEA:21096"/>
        <dbReference type="ChEBI" id="CHEBI:15377"/>
        <dbReference type="ChEBI" id="CHEBI:16630"/>
        <dbReference type="ChEBI" id="CHEBI:32364"/>
        <dbReference type="EC" id="4.2.1.10"/>
    </reaction>
</comment>
<comment type="pathway">
    <text evidence="1">Metabolic intermediate biosynthesis; chorismate biosynthesis; chorismate from D-erythrose 4-phosphate and phosphoenolpyruvate: step 3/7.</text>
</comment>
<comment type="subunit">
    <text evidence="1">Homodimer.</text>
</comment>
<comment type="similarity">
    <text evidence="1">Belongs to the type-I 3-dehydroquinase family.</text>
</comment>
<name>AROD_SHOC1</name>
<reference key="1">
    <citation type="submission" date="2003-10" db="EMBL/GenBank/DDBJ databases">
        <title>The complete genome sequence of the alkaliphilic Bacillus clausii KSM-K16.</title>
        <authorList>
            <person name="Takaki Y."/>
            <person name="Kageyama Y."/>
            <person name="Shimamura S."/>
            <person name="Suzuki H."/>
            <person name="Nishi S."/>
            <person name="Hatada Y."/>
            <person name="Kawai S."/>
            <person name="Ito S."/>
            <person name="Horikoshi K."/>
        </authorList>
    </citation>
    <scope>NUCLEOTIDE SEQUENCE [LARGE SCALE GENOMIC DNA]</scope>
    <source>
        <strain>KSM-K16</strain>
    </source>
</reference>
<keyword id="KW-0028">Amino-acid biosynthesis</keyword>
<keyword id="KW-0057">Aromatic amino acid biosynthesis</keyword>
<keyword id="KW-0456">Lyase</keyword>
<keyword id="KW-1185">Reference proteome</keyword>
<keyword id="KW-0704">Schiff base</keyword>
<evidence type="ECO:0000255" key="1">
    <source>
        <dbReference type="HAMAP-Rule" id="MF_00214"/>
    </source>
</evidence>
<feature type="chain" id="PRO_0000325518" description="3-dehydroquinate dehydratase">
    <location>
        <begin position="1"/>
        <end position="256"/>
    </location>
</feature>
<feature type="active site" description="Proton donor/acceptor" evidence="1">
    <location>
        <position position="144"/>
    </location>
</feature>
<feature type="active site" description="Schiff-base intermediate with substrate" evidence="1">
    <location>
        <position position="171"/>
    </location>
</feature>
<feature type="binding site" evidence="1">
    <location>
        <begin position="46"/>
        <end position="48"/>
    </location>
    <ligand>
        <name>3-dehydroquinate</name>
        <dbReference type="ChEBI" id="CHEBI:32364"/>
    </ligand>
</feature>
<feature type="binding site" evidence="1">
    <location>
        <position position="82"/>
    </location>
    <ligand>
        <name>3-dehydroquinate</name>
        <dbReference type="ChEBI" id="CHEBI:32364"/>
    </ligand>
</feature>
<feature type="binding site" evidence="1">
    <location>
        <position position="213"/>
    </location>
    <ligand>
        <name>3-dehydroquinate</name>
        <dbReference type="ChEBI" id="CHEBI:32364"/>
    </ligand>
</feature>
<feature type="binding site" evidence="1">
    <location>
        <position position="232"/>
    </location>
    <ligand>
        <name>3-dehydroquinate</name>
        <dbReference type="ChEBI" id="CHEBI:32364"/>
    </ligand>
</feature>
<feature type="binding site" evidence="1">
    <location>
        <position position="236"/>
    </location>
    <ligand>
        <name>3-dehydroquinate</name>
        <dbReference type="ChEBI" id="CHEBI:32364"/>
    </ligand>
</feature>
<gene>
    <name evidence="1" type="primary">aroD</name>
    <name type="ordered locus">ABC0536</name>
</gene>
<protein>
    <recommendedName>
        <fullName evidence="1">3-dehydroquinate dehydratase</fullName>
        <shortName evidence="1">3-dehydroquinase</shortName>
        <ecNumber evidence="1">4.2.1.10</ecNumber>
    </recommendedName>
    <alternativeName>
        <fullName evidence="1">Type I DHQase</fullName>
    </alternativeName>
    <alternativeName>
        <fullName evidence="1">Type I dehydroquinase</fullName>
        <shortName evidence="1">DHQ1</shortName>
    </alternativeName>
</protein>
<organism>
    <name type="scientific">Shouchella clausii (strain KSM-K16)</name>
    <name type="common">Alkalihalobacillus clausii</name>
    <dbReference type="NCBI Taxonomy" id="66692"/>
    <lineage>
        <taxon>Bacteria</taxon>
        <taxon>Bacillati</taxon>
        <taxon>Bacillota</taxon>
        <taxon>Bacilli</taxon>
        <taxon>Bacillales</taxon>
        <taxon>Bacillaceae</taxon>
        <taxon>Shouchella</taxon>
    </lineage>
</organism>
<proteinExistence type="inferred from homology"/>
<accession>Q5WKM9</accession>
<sequence>MGKPIQKTDGSTPQRPLICAPLVGKTKAALIEEIDAVAAKKPDLLEWRVDFYKHIGKTEDVLETASLLKAHSKGIPILFTRRSIREGGEPITVSEQEVTALYEQVMKLGLVDVVDVELSCPEAEKERLRAIAKETETQWILSYHDFQRTPSEADILAKLQEAEANGADVGKVAVMPETMADVLTLMQATQKAASTLTIPVITMAMGRLGTLSRMAGGACGSALTFAIANESSAPGQMPIDELRSVLDVIDRYVTGQ</sequence>